<feature type="signal peptide" evidence="3">
    <location>
        <begin position="1"/>
        <end position="19"/>
    </location>
</feature>
<feature type="chain" id="PRO_0000236076" description="Signal peptide peptidase-like 2B">
    <location>
        <begin position="20"/>
        <end position="578"/>
    </location>
</feature>
<feature type="topological domain" description="Lumenal" evidence="3">
    <location>
        <begin position="20"/>
        <end position="168"/>
    </location>
</feature>
<feature type="transmembrane region" description="Helical" evidence="4">
    <location>
        <begin position="169"/>
        <end position="189"/>
    </location>
</feature>
<feature type="topological domain" description="Cytoplasmic" evidence="4">
    <location>
        <begin position="190"/>
        <end position="216"/>
    </location>
</feature>
<feature type="transmembrane region" description="Helical" evidence="4">
    <location>
        <begin position="217"/>
        <end position="237"/>
    </location>
</feature>
<feature type="topological domain" description="Lumenal" evidence="4">
    <location>
        <begin position="238"/>
        <end position="239"/>
    </location>
</feature>
<feature type="transmembrane region" description="Helical" evidence="4">
    <location>
        <begin position="240"/>
        <end position="260"/>
    </location>
</feature>
<feature type="topological domain" description="Cytoplasmic" evidence="4">
    <location>
        <begin position="261"/>
        <end position="286"/>
    </location>
</feature>
<feature type="transmembrane region" description="Helical" evidence="4">
    <location>
        <begin position="287"/>
        <end position="307"/>
    </location>
</feature>
<feature type="topological domain" description="Lumenal" evidence="4">
    <location>
        <begin position="308"/>
        <end position="312"/>
    </location>
</feature>
<feature type="transmembrane region" description="Helical" evidence="4">
    <location>
        <begin position="313"/>
        <end position="333"/>
    </location>
</feature>
<feature type="topological domain" description="Cytoplasmic" evidence="4">
    <location>
        <begin position="334"/>
        <end position="341"/>
    </location>
</feature>
<feature type="transmembrane region" description="Helical" evidence="4">
    <location>
        <begin position="342"/>
        <end position="362"/>
    </location>
</feature>
<feature type="topological domain" description="Lumenal" evidence="3">
    <location>
        <begin position="363"/>
        <end position="405"/>
    </location>
</feature>
<feature type="transmembrane region" description="Helical" evidence="4">
    <location>
        <begin position="406"/>
        <end position="426"/>
    </location>
</feature>
<feature type="topological domain" description="Cytoplasmic" evidence="4">
    <location>
        <begin position="427"/>
        <end position="438"/>
    </location>
</feature>
<feature type="transmembrane region" description="Helical" evidence="4">
    <location>
        <begin position="439"/>
        <end position="459"/>
    </location>
</feature>
<feature type="topological domain" description="Lumenal" evidence="4">
    <location>
        <begin position="460"/>
        <end position="463"/>
    </location>
</feature>
<feature type="transmembrane region" description="Helical" evidence="4">
    <location>
        <begin position="464"/>
        <end position="484"/>
    </location>
</feature>
<feature type="topological domain" description="Cytoplasmic" evidence="3">
    <location>
        <begin position="485"/>
        <end position="578"/>
    </location>
</feature>
<feature type="domain" description="PA">
    <location>
        <begin position="61"/>
        <end position="145"/>
    </location>
</feature>
<feature type="region of interest" description="Disordered" evidence="5">
    <location>
        <begin position="502"/>
        <end position="578"/>
    </location>
</feature>
<feature type="short sequence motif" description="PAL">
    <location>
        <begin position="465"/>
        <end position="467"/>
    </location>
</feature>
<feature type="compositionally biased region" description="Low complexity" evidence="5">
    <location>
        <begin position="520"/>
        <end position="529"/>
    </location>
</feature>
<feature type="active site" evidence="2">
    <location>
        <position position="352"/>
    </location>
</feature>
<feature type="active site" evidence="2">
    <location>
        <position position="414"/>
    </location>
</feature>
<feature type="glycosylation site" description="N-linked (GlcNAc...) asparagine" evidence="4">
    <location>
        <position position="91"/>
    </location>
</feature>
<feature type="glycosylation site" description="N-linked (GlcNAc...) asparagine" evidence="4">
    <location>
        <position position="123"/>
    </location>
</feature>
<feature type="splice variant" id="VSP_018571" description="In isoform 2." evidence="7">
    <original>KDAPQT</original>
    <variation>VNTSLL</variation>
    <location>
        <begin position="499"/>
        <end position="504"/>
    </location>
</feature>
<feature type="splice variant" id="VSP_018572" description="In isoform 2." evidence="7">
    <location>
        <begin position="505"/>
        <end position="578"/>
    </location>
</feature>
<feature type="sequence conflict" description="In Ref. 1; BAE38734." evidence="8" ref="1">
    <original>R</original>
    <variation>H</variation>
    <location>
        <position position="151"/>
    </location>
</feature>
<feature type="sequence conflict" description="In Ref. 1; BAE41755." evidence="8" ref="1">
    <original>K</original>
    <variation>KR</variation>
    <location>
        <position position="194"/>
    </location>
</feature>
<feature type="sequence conflict" description="In Ref. 1; BAE41755." evidence="8" ref="1">
    <original>D</original>
    <variation>G</variation>
    <location>
        <position position="319"/>
    </location>
</feature>
<feature type="sequence conflict" description="In Ref. 1; BAE38734." evidence="8" ref="1">
    <original>P</original>
    <variation>R</variation>
    <location>
        <position position="514"/>
    </location>
</feature>
<feature type="sequence conflict" description="In Ref. 1; BAE38734." evidence="8" ref="1">
    <original>A</original>
    <variation>T</variation>
    <location>
        <position position="541"/>
    </location>
</feature>
<feature type="sequence conflict" description="In Ref. 1; BAE38734." evidence="8" ref="1">
    <original>D</original>
    <variation>N</variation>
    <location>
        <position position="549"/>
    </location>
</feature>
<gene>
    <name evidence="3 9" type="primary">Sppl2b</name>
</gene>
<accession>Q3TD49</accession>
<accession>Q3TLQ8</accession>
<accession>Q3UG60</accession>
<accession>Q80VZ6</accession>
<evidence type="ECO:0000250" key="1">
    <source>
        <dbReference type="UniProtKB" id="P49768"/>
    </source>
</evidence>
<evidence type="ECO:0000250" key="2">
    <source>
        <dbReference type="UniProtKB" id="P49810"/>
    </source>
</evidence>
<evidence type="ECO:0000250" key="3">
    <source>
        <dbReference type="UniProtKB" id="Q8TCT7"/>
    </source>
</evidence>
<evidence type="ECO:0000255" key="4"/>
<evidence type="ECO:0000256" key="5">
    <source>
        <dbReference type="SAM" id="MobiDB-lite"/>
    </source>
</evidence>
<evidence type="ECO:0000269" key="6">
    <source>
    </source>
</evidence>
<evidence type="ECO:0000303" key="7">
    <source>
    </source>
</evidence>
<evidence type="ECO:0000305" key="8"/>
<evidence type="ECO:0000312" key="9">
    <source>
        <dbReference type="MGI" id="MGI:1920468"/>
    </source>
</evidence>
<name>SPP2B_MOUSE</name>
<comment type="function">
    <text evidence="3">Intramembrane-cleaving aspartic protease (I-CLiP) that cleaves type II membrane signal peptides in the hydrophobic plane of the membrane. Functions in ITM2B and TNF processing. Catalyzes the intramembrane cleavage of the anchored fragment of shed TNF-alpha (TNF), which promotes the release of the intracellular domain (ICD) for signaling to the nucleus. May play a role in the regulation of innate and adaptive immunity.</text>
</comment>
<comment type="subunit">
    <text evidence="3">Monomer. Homodimer. Interacts with ITM2B and TNF.</text>
</comment>
<comment type="subcellular location">
    <subcellularLocation>
        <location evidence="6">Cell membrane</location>
        <topology evidence="8">Multi-pass membrane protein</topology>
    </subcellularLocation>
    <subcellularLocation>
        <location evidence="3">Golgi apparatus membrane</location>
        <topology evidence="3">Multi-pass membrane protein</topology>
    </subcellularLocation>
    <subcellularLocation>
        <location evidence="3">Lysosome membrane</location>
        <topology evidence="3">Multi-pass membrane protein</topology>
    </subcellularLocation>
    <subcellularLocation>
        <location evidence="3">Endosome membrane</location>
        <topology evidence="3">Multi-pass membrane protein</topology>
    </subcellularLocation>
    <subcellularLocation>
        <location evidence="3">Membrane</location>
        <topology evidence="3">Multi-pass membrane protein</topology>
        <orientation evidence="3">Lumenal side</orientation>
    </subcellularLocation>
    <text evidence="3">targeted through the entire secretory pathway to endosomes/lysosomes.</text>
</comment>
<comment type="alternative products">
    <event type="alternative splicing"/>
    <isoform>
        <id>Q3TD49-1</id>
        <name>1</name>
        <sequence type="displayed"/>
    </isoform>
    <isoform>
        <id>Q3TD49-2</id>
        <name>2</name>
        <sequence type="described" ref="VSP_018571 VSP_018572"/>
    </isoform>
</comment>
<comment type="domain">
    <text evidence="1">The PAL motif is required for normal active site conformation. The catalytic domains embedded in the membrane are in the opposite orientation to that of the presenilin protein family; therefore, it is predicted to cleave type II-oriented substrate peptides like the prototypic protease SPP.</text>
</comment>
<comment type="PTM">
    <text evidence="3">Glycosylated.</text>
</comment>
<comment type="similarity">
    <text evidence="8">Belongs to the peptidase A22B family.</text>
</comment>
<sequence length="578" mass="63824">MAAARLAAALLLLAAQVACEFGVLRVVSQTSRTRSRDYCILYNPQWAHLPHDLSKVSLLKLRDLSTTQLCSYLDVPAEDFTNQIALVARGNCTFYEKVRLAQGSGAHGLLIVSKEKLVPPGGNKTQYEEISIPVALLSHRDLQDIFRRFGREVMVALYAPSEPVMDYNMVIIFVMAVGTVAIGGYWAGSHDVKKYMKHKRDDGPEKQEDEAVDVTPVMICVFVVMCCFMLVLLYYFYDRLVYVIIGIFCLASSTGLYSCLAPFVRKLPFCTCRVPDNNLPYFHKRPQARMLLLALFCVTVSVVWGIFRNEDQWAWVLQDTLGIAFCLYMLKTIRLPTFKACTLLLLVLFIYDIFFVFITPFLTKSGNSIMVEVATGPSNSSTHEKLPMVLKVPRLNTSPLSLCDRPFSLLGFGDILVPGLLVAYCHRFDIQVQSSRIYFVACTIAYGLGLLVTFVALVLMQRGQPALLYLVPCTLLTSCTVALWRRELGAFWTGSGFAKDAPQTPWAATQGPVPPKAVGSSLSEQPPSEELAKSPLSTEEAGAADPAKDPDNPVASPLSPSNGDEAQPIPVVKPETSA</sequence>
<protein>
    <recommendedName>
        <fullName evidence="3">Signal peptide peptidase-like 2B</fullName>
        <shortName evidence="3">SPP-like 2B</shortName>
        <shortName evidence="3">SPPL2b</shortName>
        <ecNumber>3.4.23.-</ecNumber>
    </recommendedName>
</protein>
<dbReference type="EC" id="3.4.23.-"/>
<dbReference type="EMBL" id="AK148109">
    <property type="protein sequence ID" value="BAE28349.1"/>
    <property type="molecule type" value="mRNA"/>
</dbReference>
<dbReference type="EMBL" id="AK166364">
    <property type="protein sequence ID" value="BAE38734.1"/>
    <property type="molecule type" value="mRNA"/>
</dbReference>
<dbReference type="EMBL" id="AK170375">
    <property type="protein sequence ID" value="BAE41755.1"/>
    <property type="molecule type" value="mRNA"/>
</dbReference>
<dbReference type="EMBL" id="BC052094">
    <property type="protein sequence ID" value="AAH52094.1"/>
    <property type="molecule type" value="mRNA"/>
</dbReference>
<dbReference type="CCDS" id="CCDS35988.1">
    <molecule id="Q3TD49-1"/>
</dbReference>
<dbReference type="RefSeq" id="NP_780404.2">
    <molecule id="Q3TD49-1"/>
    <property type="nucleotide sequence ID" value="NM_175195.3"/>
</dbReference>
<dbReference type="RefSeq" id="XP_030101171.1">
    <molecule id="Q3TD49-2"/>
    <property type="nucleotide sequence ID" value="XM_030245311.2"/>
</dbReference>
<dbReference type="RefSeq" id="XP_030101172.1">
    <molecule id="Q3TD49-2"/>
    <property type="nucleotide sequence ID" value="XM_030245312.2"/>
</dbReference>
<dbReference type="BioGRID" id="215843">
    <property type="interactions" value="1"/>
</dbReference>
<dbReference type="FunCoup" id="Q3TD49">
    <property type="interactions" value="985"/>
</dbReference>
<dbReference type="STRING" id="10090.ENSMUSP00000036289"/>
<dbReference type="MEROPS" id="A22.004"/>
<dbReference type="GlyCosmos" id="Q3TD49">
    <property type="glycosylation" value="2 sites, No reported glycans"/>
</dbReference>
<dbReference type="GlyGen" id="Q3TD49">
    <property type="glycosylation" value="5 sites, 1 N-linked glycan (4 sites), 1 O-linked glycan (1 site)"/>
</dbReference>
<dbReference type="iPTMnet" id="Q3TD49"/>
<dbReference type="PhosphoSitePlus" id="Q3TD49"/>
<dbReference type="SwissPalm" id="Q3TD49"/>
<dbReference type="PaxDb" id="10090-ENSMUSP00000036289"/>
<dbReference type="PeptideAtlas" id="Q3TD49"/>
<dbReference type="ProteomicsDB" id="257355">
    <molecule id="Q3TD49-1"/>
</dbReference>
<dbReference type="ProteomicsDB" id="257356">
    <molecule id="Q3TD49-2"/>
</dbReference>
<dbReference type="Antibodypedia" id="3352">
    <property type="antibodies" value="61 antibodies from 14 providers"/>
</dbReference>
<dbReference type="DNASU" id="73218"/>
<dbReference type="Ensembl" id="ENSMUST00000035597.10">
    <molecule id="Q3TD49-1"/>
    <property type="protein sequence ID" value="ENSMUSP00000036289.9"/>
    <property type="gene ID" value="ENSMUSG00000035206.11"/>
</dbReference>
<dbReference type="GeneID" id="73218"/>
<dbReference type="KEGG" id="mmu:73218"/>
<dbReference type="UCSC" id="uc007gfb.1">
    <molecule id="Q3TD49-1"/>
    <property type="organism name" value="mouse"/>
</dbReference>
<dbReference type="UCSC" id="uc007gfd.1">
    <molecule id="Q3TD49-2"/>
    <property type="organism name" value="mouse"/>
</dbReference>
<dbReference type="AGR" id="MGI:1920468"/>
<dbReference type="CTD" id="56928"/>
<dbReference type="MGI" id="MGI:1920468">
    <property type="gene designation" value="Sppl2b"/>
</dbReference>
<dbReference type="VEuPathDB" id="HostDB:ENSMUSG00000035206"/>
<dbReference type="eggNOG" id="KOG2442">
    <property type="taxonomic scope" value="Eukaryota"/>
</dbReference>
<dbReference type="GeneTree" id="ENSGT00940000158753"/>
<dbReference type="HOGENOM" id="CLU_023799_2_1_1"/>
<dbReference type="InParanoid" id="Q3TD49"/>
<dbReference type="OMA" id="CNNPYLM"/>
<dbReference type="PhylomeDB" id="Q3TD49"/>
<dbReference type="TreeFam" id="TF319186"/>
<dbReference type="BRENDA" id="3.4.23.B24">
    <property type="organism ID" value="3474"/>
</dbReference>
<dbReference type="Reactome" id="R-MMU-5357905">
    <property type="pathway name" value="Regulation of TNFR1 signaling"/>
</dbReference>
<dbReference type="BioGRID-ORCS" id="73218">
    <property type="hits" value="1 hit in 77 CRISPR screens"/>
</dbReference>
<dbReference type="PRO" id="PR:Q3TD49"/>
<dbReference type="Proteomes" id="UP000000589">
    <property type="component" value="Chromosome 10"/>
</dbReference>
<dbReference type="RNAct" id="Q3TD49">
    <property type="molecule type" value="protein"/>
</dbReference>
<dbReference type="Bgee" id="ENSMUSG00000035206">
    <property type="expression patterns" value="Expressed in embryonic brain and 251 other cell types or tissues"/>
</dbReference>
<dbReference type="ExpressionAtlas" id="Q3TD49">
    <property type="expression patterns" value="baseline and differential"/>
</dbReference>
<dbReference type="GO" id="GO:0015629">
    <property type="term" value="C:actin cytoskeleton"/>
    <property type="evidence" value="ECO:0007669"/>
    <property type="project" value="Ensembl"/>
</dbReference>
<dbReference type="GO" id="GO:0005813">
    <property type="term" value="C:centrosome"/>
    <property type="evidence" value="ECO:0007669"/>
    <property type="project" value="Ensembl"/>
</dbReference>
<dbReference type="GO" id="GO:0098554">
    <property type="term" value="C:cytoplasmic side of endoplasmic reticulum membrane"/>
    <property type="evidence" value="ECO:0000250"/>
    <property type="project" value="UniProtKB"/>
</dbReference>
<dbReference type="GO" id="GO:0010008">
    <property type="term" value="C:endosome membrane"/>
    <property type="evidence" value="ECO:0000250"/>
    <property type="project" value="UniProtKB"/>
</dbReference>
<dbReference type="GO" id="GO:0000139">
    <property type="term" value="C:Golgi membrane"/>
    <property type="evidence" value="ECO:0007669"/>
    <property type="project" value="UniProtKB-SubCell"/>
</dbReference>
<dbReference type="GO" id="GO:0030660">
    <property type="term" value="C:Golgi-associated vesicle membrane"/>
    <property type="evidence" value="ECO:0000250"/>
    <property type="project" value="UniProtKB"/>
</dbReference>
<dbReference type="GO" id="GO:0098553">
    <property type="term" value="C:lumenal side of endoplasmic reticulum membrane"/>
    <property type="evidence" value="ECO:0000250"/>
    <property type="project" value="UniProtKB"/>
</dbReference>
<dbReference type="GO" id="GO:0005765">
    <property type="term" value="C:lysosomal membrane"/>
    <property type="evidence" value="ECO:0000250"/>
    <property type="project" value="UniProtKB"/>
</dbReference>
<dbReference type="GO" id="GO:0016020">
    <property type="term" value="C:membrane"/>
    <property type="evidence" value="ECO:0000250"/>
    <property type="project" value="UniProtKB"/>
</dbReference>
<dbReference type="GO" id="GO:0005654">
    <property type="term" value="C:nucleoplasm"/>
    <property type="evidence" value="ECO:0007669"/>
    <property type="project" value="Ensembl"/>
</dbReference>
<dbReference type="GO" id="GO:0005886">
    <property type="term" value="C:plasma membrane"/>
    <property type="evidence" value="ECO:0000250"/>
    <property type="project" value="UniProtKB"/>
</dbReference>
<dbReference type="GO" id="GO:0008233">
    <property type="term" value="F:peptidase activity"/>
    <property type="evidence" value="ECO:0007669"/>
    <property type="project" value="UniProtKB-KW"/>
</dbReference>
<dbReference type="GO" id="GO:0042803">
    <property type="term" value="F:protein homodimerization activity"/>
    <property type="evidence" value="ECO:0000250"/>
    <property type="project" value="UniProtKB"/>
</dbReference>
<dbReference type="GO" id="GO:0006509">
    <property type="term" value="P:membrane protein ectodomain proteolysis"/>
    <property type="evidence" value="ECO:0000250"/>
    <property type="project" value="UniProtKB"/>
</dbReference>
<dbReference type="GO" id="GO:0031293">
    <property type="term" value="P:membrane protein intracellular domain proteolysis"/>
    <property type="evidence" value="ECO:0000250"/>
    <property type="project" value="UniProtKB"/>
</dbReference>
<dbReference type="GO" id="GO:0033619">
    <property type="term" value="P:membrane protein proteolysis"/>
    <property type="evidence" value="ECO:0000250"/>
    <property type="project" value="UniProtKB"/>
</dbReference>
<dbReference type="GO" id="GO:0050776">
    <property type="term" value="P:regulation of immune response"/>
    <property type="evidence" value="ECO:0000250"/>
    <property type="project" value="UniProtKB"/>
</dbReference>
<dbReference type="CDD" id="cd02129">
    <property type="entry name" value="PA_hSPPL_like"/>
    <property type="match status" value="1"/>
</dbReference>
<dbReference type="Gene3D" id="3.50.30.30">
    <property type="match status" value="1"/>
</dbReference>
<dbReference type="InterPro" id="IPR046450">
    <property type="entry name" value="PA_dom_sf"/>
</dbReference>
<dbReference type="InterPro" id="IPR003137">
    <property type="entry name" value="PA_domain"/>
</dbReference>
<dbReference type="InterPro" id="IPR007369">
    <property type="entry name" value="Peptidase_A22B_SPP"/>
</dbReference>
<dbReference type="InterPro" id="IPR006639">
    <property type="entry name" value="Preselin/SPP"/>
</dbReference>
<dbReference type="PANTHER" id="PTHR12174">
    <property type="entry name" value="SIGNAL PEPTIDE PEPTIDASE"/>
    <property type="match status" value="1"/>
</dbReference>
<dbReference type="PANTHER" id="PTHR12174:SF39">
    <property type="entry name" value="SIGNAL PEPTIDE PEPTIDASE-LIKE 2B"/>
    <property type="match status" value="1"/>
</dbReference>
<dbReference type="Pfam" id="PF02225">
    <property type="entry name" value="PA"/>
    <property type="match status" value="1"/>
</dbReference>
<dbReference type="Pfam" id="PF04258">
    <property type="entry name" value="Peptidase_A22B"/>
    <property type="match status" value="1"/>
</dbReference>
<dbReference type="SMART" id="SM00730">
    <property type="entry name" value="PSN"/>
    <property type="match status" value="1"/>
</dbReference>
<dbReference type="SUPFAM" id="SSF52025">
    <property type="entry name" value="PA domain"/>
    <property type="match status" value="1"/>
</dbReference>
<keyword id="KW-0025">Alternative splicing</keyword>
<keyword id="KW-1003">Cell membrane</keyword>
<keyword id="KW-0967">Endosome</keyword>
<keyword id="KW-0325">Glycoprotein</keyword>
<keyword id="KW-0333">Golgi apparatus</keyword>
<keyword id="KW-0378">Hydrolase</keyword>
<keyword id="KW-0458">Lysosome</keyword>
<keyword id="KW-0472">Membrane</keyword>
<keyword id="KW-0645">Protease</keyword>
<keyword id="KW-1185">Reference proteome</keyword>
<keyword id="KW-0732">Signal</keyword>
<keyword id="KW-0812">Transmembrane</keyword>
<keyword id="KW-1133">Transmembrane helix</keyword>
<proteinExistence type="evidence at protein level"/>
<organism>
    <name type="scientific">Mus musculus</name>
    <name type="common">Mouse</name>
    <dbReference type="NCBI Taxonomy" id="10090"/>
    <lineage>
        <taxon>Eukaryota</taxon>
        <taxon>Metazoa</taxon>
        <taxon>Chordata</taxon>
        <taxon>Craniata</taxon>
        <taxon>Vertebrata</taxon>
        <taxon>Euteleostomi</taxon>
        <taxon>Mammalia</taxon>
        <taxon>Eutheria</taxon>
        <taxon>Euarchontoglires</taxon>
        <taxon>Glires</taxon>
        <taxon>Rodentia</taxon>
        <taxon>Myomorpha</taxon>
        <taxon>Muroidea</taxon>
        <taxon>Muridae</taxon>
        <taxon>Murinae</taxon>
        <taxon>Mus</taxon>
        <taxon>Mus</taxon>
    </lineage>
</organism>
<reference key="1">
    <citation type="journal article" date="2005" name="Science">
        <title>The transcriptional landscape of the mammalian genome.</title>
        <authorList>
            <person name="Carninci P."/>
            <person name="Kasukawa T."/>
            <person name="Katayama S."/>
            <person name="Gough J."/>
            <person name="Frith M.C."/>
            <person name="Maeda N."/>
            <person name="Oyama R."/>
            <person name="Ravasi T."/>
            <person name="Lenhard B."/>
            <person name="Wells C."/>
            <person name="Kodzius R."/>
            <person name="Shimokawa K."/>
            <person name="Bajic V.B."/>
            <person name="Brenner S.E."/>
            <person name="Batalov S."/>
            <person name="Forrest A.R."/>
            <person name="Zavolan M."/>
            <person name="Davis M.J."/>
            <person name="Wilming L.G."/>
            <person name="Aidinis V."/>
            <person name="Allen J.E."/>
            <person name="Ambesi-Impiombato A."/>
            <person name="Apweiler R."/>
            <person name="Aturaliya R.N."/>
            <person name="Bailey T.L."/>
            <person name="Bansal M."/>
            <person name="Baxter L."/>
            <person name="Beisel K.W."/>
            <person name="Bersano T."/>
            <person name="Bono H."/>
            <person name="Chalk A.M."/>
            <person name="Chiu K.P."/>
            <person name="Choudhary V."/>
            <person name="Christoffels A."/>
            <person name="Clutterbuck D.R."/>
            <person name="Crowe M.L."/>
            <person name="Dalla E."/>
            <person name="Dalrymple B.P."/>
            <person name="de Bono B."/>
            <person name="Della Gatta G."/>
            <person name="di Bernardo D."/>
            <person name="Down T."/>
            <person name="Engstrom P."/>
            <person name="Fagiolini M."/>
            <person name="Faulkner G."/>
            <person name="Fletcher C.F."/>
            <person name="Fukushima T."/>
            <person name="Furuno M."/>
            <person name="Futaki S."/>
            <person name="Gariboldi M."/>
            <person name="Georgii-Hemming P."/>
            <person name="Gingeras T.R."/>
            <person name="Gojobori T."/>
            <person name="Green R.E."/>
            <person name="Gustincich S."/>
            <person name="Harbers M."/>
            <person name="Hayashi Y."/>
            <person name="Hensch T.K."/>
            <person name="Hirokawa N."/>
            <person name="Hill D."/>
            <person name="Huminiecki L."/>
            <person name="Iacono M."/>
            <person name="Ikeo K."/>
            <person name="Iwama A."/>
            <person name="Ishikawa T."/>
            <person name="Jakt M."/>
            <person name="Kanapin A."/>
            <person name="Katoh M."/>
            <person name="Kawasawa Y."/>
            <person name="Kelso J."/>
            <person name="Kitamura H."/>
            <person name="Kitano H."/>
            <person name="Kollias G."/>
            <person name="Krishnan S.P."/>
            <person name="Kruger A."/>
            <person name="Kummerfeld S.K."/>
            <person name="Kurochkin I.V."/>
            <person name="Lareau L.F."/>
            <person name="Lazarevic D."/>
            <person name="Lipovich L."/>
            <person name="Liu J."/>
            <person name="Liuni S."/>
            <person name="McWilliam S."/>
            <person name="Madan Babu M."/>
            <person name="Madera M."/>
            <person name="Marchionni L."/>
            <person name="Matsuda H."/>
            <person name="Matsuzawa S."/>
            <person name="Miki H."/>
            <person name="Mignone F."/>
            <person name="Miyake S."/>
            <person name="Morris K."/>
            <person name="Mottagui-Tabar S."/>
            <person name="Mulder N."/>
            <person name="Nakano N."/>
            <person name="Nakauchi H."/>
            <person name="Ng P."/>
            <person name="Nilsson R."/>
            <person name="Nishiguchi S."/>
            <person name="Nishikawa S."/>
            <person name="Nori F."/>
            <person name="Ohara O."/>
            <person name="Okazaki Y."/>
            <person name="Orlando V."/>
            <person name="Pang K.C."/>
            <person name="Pavan W.J."/>
            <person name="Pavesi G."/>
            <person name="Pesole G."/>
            <person name="Petrovsky N."/>
            <person name="Piazza S."/>
            <person name="Reed J."/>
            <person name="Reid J.F."/>
            <person name="Ring B.Z."/>
            <person name="Ringwald M."/>
            <person name="Rost B."/>
            <person name="Ruan Y."/>
            <person name="Salzberg S.L."/>
            <person name="Sandelin A."/>
            <person name="Schneider C."/>
            <person name="Schoenbach C."/>
            <person name="Sekiguchi K."/>
            <person name="Semple C.A."/>
            <person name="Seno S."/>
            <person name="Sessa L."/>
            <person name="Sheng Y."/>
            <person name="Shibata Y."/>
            <person name="Shimada H."/>
            <person name="Shimada K."/>
            <person name="Silva D."/>
            <person name="Sinclair B."/>
            <person name="Sperling S."/>
            <person name="Stupka E."/>
            <person name="Sugiura K."/>
            <person name="Sultana R."/>
            <person name="Takenaka Y."/>
            <person name="Taki K."/>
            <person name="Tammoja K."/>
            <person name="Tan S.L."/>
            <person name="Tang S."/>
            <person name="Taylor M.S."/>
            <person name="Tegner J."/>
            <person name="Teichmann S.A."/>
            <person name="Ueda H.R."/>
            <person name="van Nimwegen E."/>
            <person name="Verardo R."/>
            <person name="Wei C.L."/>
            <person name="Yagi K."/>
            <person name="Yamanishi H."/>
            <person name="Zabarovsky E."/>
            <person name="Zhu S."/>
            <person name="Zimmer A."/>
            <person name="Hide W."/>
            <person name="Bult C."/>
            <person name="Grimmond S.M."/>
            <person name="Teasdale R.D."/>
            <person name="Liu E.T."/>
            <person name="Brusic V."/>
            <person name="Quackenbush J."/>
            <person name="Wahlestedt C."/>
            <person name="Mattick J.S."/>
            <person name="Hume D.A."/>
            <person name="Kai C."/>
            <person name="Sasaki D."/>
            <person name="Tomaru Y."/>
            <person name="Fukuda S."/>
            <person name="Kanamori-Katayama M."/>
            <person name="Suzuki M."/>
            <person name="Aoki J."/>
            <person name="Arakawa T."/>
            <person name="Iida J."/>
            <person name="Imamura K."/>
            <person name="Itoh M."/>
            <person name="Kato T."/>
            <person name="Kawaji H."/>
            <person name="Kawagashira N."/>
            <person name="Kawashima T."/>
            <person name="Kojima M."/>
            <person name="Kondo S."/>
            <person name="Konno H."/>
            <person name="Nakano K."/>
            <person name="Ninomiya N."/>
            <person name="Nishio T."/>
            <person name="Okada M."/>
            <person name="Plessy C."/>
            <person name="Shibata K."/>
            <person name="Shiraki T."/>
            <person name="Suzuki S."/>
            <person name="Tagami M."/>
            <person name="Waki K."/>
            <person name="Watahiki A."/>
            <person name="Okamura-Oho Y."/>
            <person name="Suzuki H."/>
            <person name="Kawai J."/>
            <person name="Hayashizaki Y."/>
        </authorList>
    </citation>
    <scope>NUCLEOTIDE SEQUENCE [LARGE SCALE MRNA] (ISOFORMS 1 AND 2)</scope>
    <source>
        <strain>C57BL/6J</strain>
        <strain>NOD</strain>
        <tissue>Dendritic cell</tissue>
        <tissue>Mammary gland</tissue>
        <tissue>Melanoma</tissue>
    </source>
</reference>
<reference key="2">
    <citation type="journal article" date="2004" name="Genome Res.">
        <title>The status, quality, and expansion of the NIH full-length cDNA project: the Mammalian Gene Collection (MGC).</title>
        <authorList>
            <consortium name="The MGC Project Team"/>
        </authorList>
    </citation>
    <scope>NUCLEOTIDE SEQUENCE [LARGE SCALE MRNA] OF 88-578 (ISOFORM 1)</scope>
    <source>
        <strain>C57BL/6J</strain>
        <tissue>Brain</tissue>
    </source>
</reference>
<reference key="3">
    <citation type="journal article" date="2010" name="Cell">
        <title>A tissue-specific atlas of mouse protein phosphorylation and expression.</title>
        <authorList>
            <person name="Huttlin E.L."/>
            <person name="Jedrychowski M.P."/>
            <person name="Elias J.E."/>
            <person name="Goswami T."/>
            <person name="Rad R."/>
            <person name="Beausoleil S.A."/>
            <person name="Villen J."/>
            <person name="Haas W."/>
            <person name="Sowa M.E."/>
            <person name="Gygi S.P."/>
        </authorList>
    </citation>
    <scope>IDENTIFICATION BY MASS SPECTROMETRY [LARGE SCALE ANALYSIS]</scope>
    <source>
        <tissue>Brain</tissue>
        <tissue>Testis</tissue>
    </source>
</reference>
<reference key="4">
    <citation type="journal article" date="2011" name="FEBS Lett.">
        <title>Signal-peptide-peptidase-like 2a (SPPL2a) is targeted to lysosomes/late endosomes by a tyrosine motif in its C-terminal tail.</title>
        <authorList>
            <person name="Behnke J."/>
            <person name="Schneppenheim J."/>
            <person name="Koch-Nolte F."/>
            <person name="Haag F."/>
            <person name="Saftig P."/>
            <person name="Schroder B."/>
        </authorList>
    </citation>
    <scope>SUBCELLULAR LOCATION</scope>
</reference>